<name>LCL2_ASPFN</name>
<protein>
    <recommendedName>
        <fullName>Long chronological lifespan protein 2</fullName>
    </recommendedName>
</protein>
<proteinExistence type="inferred from homology"/>
<evidence type="ECO:0000250" key="1"/>
<evidence type="ECO:0000255" key="2"/>
<evidence type="ECO:0000305" key="3"/>
<reference key="1">
    <citation type="journal article" date="2015" name="Genome Announc.">
        <title>Genome sequence of Aspergillus flavus NRRL 3357, a strain that causes aflatoxin contamination of food and feed.</title>
        <authorList>
            <person name="Nierman W.C."/>
            <person name="Yu J."/>
            <person name="Fedorova-Abrams N.D."/>
            <person name="Losada L."/>
            <person name="Cleveland T.E."/>
            <person name="Bhatnagar D."/>
            <person name="Bennett J.W."/>
            <person name="Dean R."/>
            <person name="Payne G.A."/>
        </authorList>
    </citation>
    <scope>NUCLEOTIDE SEQUENCE [LARGE SCALE GENOMIC DNA]</scope>
    <source>
        <strain>ATCC 200026 / FGSC A1120 / IAM 13836 / NRRL 3357 / JCM 12722 / SRRC 167</strain>
    </source>
</reference>
<sequence>MLHTWIRTLGALLLLASVAHAQFQFFEHMFGGGRQEHQQQAAQNEPSDSSRYQNMWESAQCDKYLCPGTLACVHFPHHCPCAHPDNEDKIELSEGSAVCISKGGFQPGEAARKIELARKGVL</sequence>
<feature type="signal peptide" evidence="2">
    <location>
        <begin position="1"/>
        <end position="21"/>
    </location>
</feature>
<feature type="chain" id="PRO_0000408593" description="Long chronological lifespan protein 2">
    <location>
        <begin position="22"/>
        <end position="122"/>
    </location>
</feature>
<organism>
    <name type="scientific">Aspergillus flavus (strain ATCC 200026 / FGSC A1120 / IAM 13836 / NRRL 3357 / JCM 12722 / SRRC 167)</name>
    <dbReference type="NCBI Taxonomy" id="332952"/>
    <lineage>
        <taxon>Eukaryota</taxon>
        <taxon>Fungi</taxon>
        <taxon>Dikarya</taxon>
        <taxon>Ascomycota</taxon>
        <taxon>Pezizomycotina</taxon>
        <taxon>Eurotiomycetes</taxon>
        <taxon>Eurotiomycetidae</taxon>
        <taxon>Eurotiales</taxon>
        <taxon>Aspergillaceae</taxon>
        <taxon>Aspergillus</taxon>
        <taxon>Aspergillus subgen. Circumdati</taxon>
    </lineage>
</organism>
<comment type="function">
    <text evidence="1">Probable component of the endoplasmic reticulum-associated degradation (ERAD) pathway.</text>
</comment>
<comment type="similarity">
    <text evidence="3">Belongs to the LCL2 family.</text>
</comment>
<keyword id="KW-0732">Signal</keyword>
<dbReference type="EMBL" id="EQ963482">
    <property type="protein sequence ID" value="EED48038.1"/>
    <property type="molecule type" value="Genomic_DNA"/>
</dbReference>
<dbReference type="RefSeq" id="XP_002382880.1">
    <property type="nucleotide sequence ID" value="XM_002382839.1"/>
</dbReference>
<dbReference type="SMR" id="B8NQK0"/>
<dbReference type="STRING" id="332952.B8NQK0"/>
<dbReference type="EnsemblFungi" id="EED48038">
    <property type="protein sequence ID" value="EED48038"/>
    <property type="gene ID" value="AFLA_006820"/>
</dbReference>
<dbReference type="VEuPathDB" id="FungiDB:AFLA_012040"/>
<dbReference type="eggNOG" id="ENOG502S416">
    <property type="taxonomic scope" value="Eukaryota"/>
</dbReference>
<dbReference type="HOGENOM" id="CLU_142363_0_0_1"/>
<dbReference type="OMA" id="DNYLCPD"/>
<dbReference type="GO" id="GO:0036503">
    <property type="term" value="P:ERAD pathway"/>
    <property type="evidence" value="ECO:0007669"/>
    <property type="project" value="TreeGrafter"/>
</dbReference>
<dbReference type="CDD" id="cd23996">
    <property type="entry name" value="LCL2-like"/>
    <property type="match status" value="1"/>
</dbReference>
<dbReference type="InterPro" id="IPR034543">
    <property type="entry name" value="LCL2"/>
</dbReference>
<dbReference type="PANTHER" id="PTHR38425">
    <property type="entry name" value="LONG CHRONOLOGICAL LIFESPAN PROTEIN 2"/>
    <property type="match status" value="1"/>
</dbReference>
<dbReference type="PANTHER" id="PTHR38425:SF1">
    <property type="entry name" value="LONG CHRONOLOGICAL LIFESPAN PROTEIN 2"/>
    <property type="match status" value="1"/>
</dbReference>
<gene>
    <name type="primary">lcl2</name>
    <name type="ORF">AFLA_006820</name>
</gene>
<accession>B8NQK0</accession>